<comment type="function">
    <text evidence="1">Converts GTP to 7,8-dihydroneopterin triphosphate.</text>
</comment>
<comment type="catalytic activity">
    <reaction evidence="1">
        <text>GTP + H2O = 7,8-dihydroneopterin 3'-triphosphate + formate + H(+)</text>
        <dbReference type="Rhea" id="RHEA:17473"/>
        <dbReference type="ChEBI" id="CHEBI:15377"/>
        <dbReference type="ChEBI" id="CHEBI:15378"/>
        <dbReference type="ChEBI" id="CHEBI:15740"/>
        <dbReference type="ChEBI" id="CHEBI:37565"/>
        <dbReference type="ChEBI" id="CHEBI:58462"/>
        <dbReference type="EC" id="3.5.4.16"/>
    </reaction>
</comment>
<comment type="pathway">
    <text evidence="1">Cofactor biosynthesis; 7,8-dihydroneopterin triphosphate biosynthesis; 7,8-dihydroneopterin triphosphate from GTP: step 1/1.</text>
</comment>
<comment type="similarity">
    <text evidence="1">Belongs to the GTP cyclohydrolase IV family.</text>
</comment>
<evidence type="ECO:0000255" key="1">
    <source>
        <dbReference type="HAMAP-Rule" id="MF_01527"/>
    </source>
</evidence>
<dbReference type="EC" id="3.5.4.16" evidence="1"/>
<dbReference type="EMBL" id="AM180252">
    <property type="protein sequence ID" value="CAJ55145.1"/>
    <property type="molecule type" value="Genomic_DNA"/>
</dbReference>
<dbReference type="RefSeq" id="WP_011527174.1">
    <property type="nucleotide sequence ID" value="NC_008011.1"/>
</dbReference>
<dbReference type="SMR" id="Q1MPD2"/>
<dbReference type="STRING" id="363253.LI1091"/>
<dbReference type="KEGG" id="lip:LI1091"/>
<dbReference type="eggNOG" id="COG1469">
    <property type="taxonomic scope" value="Bacteria"/>
</dbReference>
<dbReference type="HOGENOM" id="CLU_062816_1_1_7"/>
<dbReference type="OrthoDB" id="9774824at2"/>
<dbReference type="UniPathway" id="UPA00848">
    <property type="reaction ID" value="UER00151"/>
</dbReference>
<dbReference type="Proteomes" id="UP000002430">
    <property type="component" value="Chromosome"/>
</dbReference>
<dbReference type="GO" id="GO:0003934">
    <property type="term" value="F:GTP cyclohydrolase I activity"/>
    <property type="evidence" value="ECO:0007669"/>
    <property type="project" value="UniProtKB-UniRule"/>
</dbReference>
<dbReference type="GO" id="GO:0046654">
    <property type="term" value="P:tetrahydrofolate biosynthetic process"/>
    <property type="evidence" value="ECO:0007669"/>
    <property type="project" value="UniProtKB-UniRule"/>
</dbReference>
<dbReference type="Gene3D" id="3.10.270.10">
    <property type="entry name" value="Urate Oxidase"/>
    <property type="match status" value="1"/>
</dbReference>
<dbReference type="HAMAP" id="MF_01527_B">
    <property type="entry name" value="GTP_cyclohydrol_B"/>
    <property type="match status" value="1"/>
</dbReference>
<dbReference type="InterPro" id="IPR022838">
    <property type="entry name" value="GTP_cyclohydrolase_FolE2"/>
</dbReference>
<dbReference type="InterPro" id="IPR003801">
    <property type="entry name" value="GTP_cyclohydrolase_FolE2/MptA"/>
</dbReference>
<dbReference type="NCBIfam" id="NF010200">
    <property type="entry name" value="PRK13674.1-1"/>
    <property type="match status" value="1"/>
</dbReference>
<dbReference type="PANTHER" id="PTHR36445">
    <property type="entry name" value="GTP CYCLOHYDROLASE MPTA"/>
    <property type="match status" value="1"/>
</dbReference>
<dbReference type="PANTHER" id="PTHR36445:SF1">
    <property type="entry name" value="GTP CYCLOHYDROLASE MPTA"/>
    <property type="match status" value="1"/>
</dbReference>
<dbReference type="Pfam" id="PF02649">
    <property type="entry name" value="GCHY-1"/>
    <property type="match status" value="1"/>
</dbReference>
<feature type="chain" id="PRO_0000289495" description="GTP cyclohydrolase FolE2">
    <location>
        <begin position="1"/>
        <end position="258"/>
    </location>
</feature>
<feature type="site" description="May be catalytically important" evidence="1">
    <location>
        <position position="145"/>
    </location>
</feature>
<accession>Q1MPD2</accession>
<gene>
    <name evidence="1" type="primary">folE2</name>
    <name type="ordered locus">LI1091</name>
</gene>
<keyword id="KW-0378">Hydrolase</keyword>
<keyword id="KW-1185">Reference proteome</keyword>
<protein>
    <recommendedName>
        <fullName evidence="1">GTP cyclohydrolase FolE2</fullName>
        <ecNumber evidence="1">3.5.4.16</ecNumber>
    </recommendedName>
</protein>
<sequence>MKDIQSTPAQIAFPIDRVGVKGLKFPIQIQTRDIGMQHTVAIVDMGVDLSVSSRGTHMSRFVEVLQDWNEPLCCESLERLVKQTQKKLQSQHAYIAFFFPYFLHKRAPSTNMLSLFSYDCKLSAKSINYNIEFILELTVPVMTVCPCSKAISHEGAHSQRSEIYIQLRLEQFRFIEDFIVLAESSASSPLYSLLKRADEKYVTEDAFAHPKFVEDVVRNISSKLITVTDVLGFRVEVESFESIHAHNAFAYIEHEFIC</sequence>
<proteinExistence type="inferred from homology"/>
<organism>
    <name type="scientific">Lawsonia intracellularis (strain PHE/MN1-00)</name>
    <dbReference type="NCBI Taxonomy" id="363253"/>
    <lineage>
        <taxon>Bacteria</taxon>
        <taxon>Pseudomonadati</taxon>
        <taxon>Thermodesulfobacteriota</taxon>
        <taxon>Desulfovibrionia</taxon>
        <taxon>Desulfovibrionales</taxon>
        <taxon>Desulfovibrionaceae</taxon>
        <taxon>Lawsonia</taxon>
    </lineage>
</organism>
<name>GCH4_LAWIP</name>
<reference key="1">
    <citation type="submission" date="2005-11" db="EMBL/GenBank/DDBJ databases">
        <title>The complete genome sequence of Lawsonia intracellularis: the causative agent of proliferative enteropathy.</title>
        <authorList>
            <person name="Kaur K."/>
            <person name="Zhang Q."/>
            <person name="Beckler D."/>
            <person name="Munir S."/>
            <person name="Li L."/>
            <person name="Kinsley K."/>
            <person name="Herron L."/>
            <person name="Peterson A."/>
            <person name="May B."/>
            <person name="Singh S."/>
            <person name="Gebhart C."/>
            <person name="Kapur V."/>
        </authorList>
    </citation>
    <scope>NUCLEOTIDE SEQUENCE [LARGE SCALE GENOMIC DNA]</scope>
    <source>
        <strain>PHE/MN1-00</strain>
    </source>
</reference>